<gene>
    <name evidence="2" type="primary">rnb</name>
    <name type="ordered locus">YPK_2016</name>
</gene>
<sequence length="644" mass="72857">MFQDNPLLAQLKQQLHTQTPRVEGVVKGTEKGFGFLEVDGQKSYFIPPPQMKKVMHGDRIIATLHTDKDREIAEPETLVEPFLSRFVGRVQRKDDRLSIVPDHPLLRDAIQCRPVRELTHSFQNGDWAVAEMCRHPLKGDRAFQADLTAFITNGEDHFVPWWVTLARHNLEREAPAMVESALNDAELEREDLTALNFVTIDSASTEDMDDALFVQDNGDGSWLLTIAIADPTAYVVENSELDLTARKRAFTNYLPGFNIPMLPRDLSDNLCSLRPNERRPVLVCRVTITEEGTLSNDIRFSAAWVESKAKLVYDDVSDWLEGNNRWQPQDTAIAEQITLLKRICDARSNWRQQHALVFKDRPDYRFLLGEKGEVLDIIVEHRRIANRIVEECMIAANVCAALALREHLGFGIYNVHTGFDPALVEQAASVLKANGVGADPQALLTLPGFCELRRHLDALPTQFLDSRIRRFQTFAEISTVPGPHFGLGLEAYATWTSPIRKYGDMVNHRLLKAIITGQQAEKPQEEITVQLAERRRLNRMAERDVGDWLYARYLQPQAGTDTRFTAEIIDITRGGLRVRLLDNGAVAFIPAPFIHAVRDEVVCSQETGTVQIKGETVYSQSDKIEVRIAEVRMETRNVIARPVA</sequence>
<keyword id="KW-0963">Cytoplasm</keyword>
<keyword id="KW-0269">Exonuclease</keyword>
<keyword id="KW-0378">Hydrolase</keyword>
<keyword id="KW-0540">Nuclease</keyword>
<keyword id="KW-0694">RNA-binding</keyword>
<accession>B1JKP2</accession>
<proteinExistence type="inferred from homology"/>
<feature type="chain" id="PRO_1000135884" description="Exoribonuclease 2">
    <location>
        <begin position="1"/>
        <end position="644"/>
    </location>
</feature>
<feature type="domain" description="RNB" evidence="1">
    <location>
        <begin position="189"/>
        <end position="516"/>
    </location>
</feature>
<feature type="domain" description="S1 motif" evidence="2">
    <location>
        <begin position="561"/>
        <end position="643"/>
    </location>
</feature>
<reference key="1">
    <citation type="submission" date="2008-02" db="EMBL/GenBank/DDBJ databases">
        <title>Complete sequence of Yersinia pseudotuberculosis YPIII.</title>
        <authorList>
            <consortium name="US DOE Joint Genome Institute"/>
            <person name="Copeland A."/>
            <person name="Lucas S."/>
            <person name="Lapidus A."/>
            <person name="Glavina del Rio T."/>
            <person name="Dalin E."/>
            <person name="Tice H."/>
            <person name="Bruce D."/>
            <person name="Goodwin L."/>
            <person name="Pitluck S."/>
            <person name="Munk A.C."/>
            <person name="Brettin T."/>
            <person name="Detter J.C."/>
            <person name="Han C."/>
            <person name="Tapia R."/>
            <person name="Schmutz J."/>
            <person name="Larimer F."/>
            <person name="Land M."/>
            <person name="Hauser L."/>
            <person name="Challacombe J.F."/>
            <person name="Green L."/>
            <person name="Lindler L.E."/>
            <person name="Nikolich M.P."/>
            <person name="Richardson P."/>
        </authorList>
    </citation>
    <scope>NUCLEOTIDE SEQUENCE [LARGE SCALE GENOMIC DNA]</scope>
    <source>
        <strain>YPIII</strain>
    </source>
</reference>
<name>RNB_YERPY</name>
<evidence type="ECO:0000255" key="1"/>
<evidence type="ECO:0000255" key="2">
    <source>
        <dbReference type="HAMAP-Rule" id="MF_01036"/>
    </source>
</evidence>
<comment type="function">
    <text evidence="2">Involved in mRNA degradation. Hydrolyzes single-stranded polyribonucleotides processively in the 3' to 5' direction.</text>
</comment>
<comment type="catalytic activity">
    <reaction evidence="2">
        <text>Exonucleolytic cleavage in the 3'- to 5'-direction to yield nucleoside 5'-phosphates.</text>
        <dbReference type="EC" id="3.1.13.1"/>
    </reaction>
</comment>
<comment type="subcellular location">
    <subcellularLocation>
        <location evidence="2">Cytoplasm</location>
    </subcellularLocation>
</comment>
<comment type="similarity">
    <text evidence="2">Belongs to the RNR ribonuclease family. RNase II subfamily.</text>
</comment>
<protein>
    <recommendedName>
        <fullName evidence="2">Exoribonuclease 2</fullName>
        <ecNumber evidence="2">3.1.13.1</ecNumber>
    </recommendedName>
    <alternativeName>
        <fullName evidence="2">Exoribonuclease II</fullName>
        <shortName evidence="2">RNase II</shortName>
        <shortName evidence="2">Ribonuclease II</shortName>
    </alternativeName>
</protein>
<dbReference type="EC" id="3.1.13.1" evidence="2"/>
<dbReference type="EMBL" id="CP000950">
    <property type="protein sequence ID" value="ACA68303.1"/>
    <property type="molecule type" value="Genomic_DNA"/>
</dbReference>
<dbReference type="RefSeq" id="WP_012304079.1">
    <property type="nucleotide sequence ID" value="NZ_CP009792.1"/>
</dbReference>
<dbReference type="SMR" id="B1JKP2"/>
<dbReference type="KEGG" id="ypy:YPK_2016"/>
<dbReference type="PATRIC" id="fig|502800.11.peg.2693"/>
<dbReference type="GO" id="GO:0005829">
    <property type="term" value="C:cytosol"/>
    <property type="evidence" value="ECO:0007669"/>
    <property type="project" value="TreeGrafter"/>
</dbReference>
<dbReference type="GO" id="GO:0008859">
    <property type="term" value="F:exoribonuclease II activity"/>
    <property type="evidence" value="ECO:0007669"/>
    <property type="project" value="UniProtKB-UniRule"/>
</dbReference>
<dbReference type="GO" id="GO:0003723">
    <property type="term" value="F:RNA binding"/>
    <property type="evidence" value="ECO:0007669"/>
    <property type="project" value="UniProtKB-KW"/>
</dbReference>
<dbReference type="GO" id="GO:0006402">
    <property type="term" value="P:mRNA catabolic process"/>
    <property type="evidence" value="ECO:0007669"/>
    <property type="project" value="UniProtKB-UniRule"/>
</dbReference>
<dbReference type="FunFam" id="2.40.50.140:FF:000079">
    <property type="entry name" value="Exoribonuclease 2"/>
    <property type="match status" value="1"/>
</dbReference>
<dbReference type="Gene3D" id="2.40.50.640">
    <property type="match status" value="1"/>
</dbReference>
<dbReference type="Gene3D" id="2.40.50.140">
    <property type="entry name" value="Nucleic acid-binding proteins"/>
    <property type="match status" value="2"/>
</dbReference>
<dbReference type="HAMAP" id="MF_01036">
    <property type="entry name" value="RNase_II"/>
    <property type="match status" value="1"/>
</dbReference>
<dbReference type="InterPro" id="IPR011129">
    <property type="entry name" value="CSD"/>
</dbReference>
<dbReference type="InterPro" id="IPR012340">
    <property type="entry name" value="NA-bd_OB-fold"/>
</dbReference>
<dbReference type="InterPro" id="IPR013223">
    <property type="entry name" value="RNase_B_OB_dom"/>
</dbReference>
<dbReference type="InterPro" id="IPR011804">
    <property type="entry name" value="RNase_II"/>
</dbReference>
<dbReference type="InterPro" id="IPR001900">
    <property type="entry name" value="RNase_II/R"/>
</dbReference>
<dbReference type="InterPro" id="IPR022966">
    <property type="entry name" value="RNase_II/R_CS"/>
</dbReference>
<dbReference type="InterPro" id="IPR004476">
    <property type="entry name" value="RNase_II/RNase_R"/>
</dbReference>
<dbReference type="InterPro" id="IPR050180">
    <property type="entry name" value="RNR_Ribonuclease"/>
</dbReference>
<dbReference type="InterPro" id="IPR003029">
    <property type="entry name" value="S1_domain"/>
</dbReference>
<dbReference type="NCBIfam" id="TIGR00358">
    <property type="entry name" value="3_prime_RNase"/>
    <property type="match status" value="1"/>
</dbReference>
<dbReference type="NCBIfam" id="NF003455">
    <property type="entry name" value="PRK05054.1"/>
    <property type="match status" value="1"/>
</dbReference>
<dbReference type="NCBIfam" id="TIGR02062">
    <property type="entry name" value="RNase_B"/>
    <property type="match status" value="1"/>
</dbReference>
<dbReference type="PANTHER" id="PTHR23355:SF37">
    <property type="entry name" value="EXORIBONUCLEASE 2"/>
    <property type="match status" value="1"/>
</dbReference>
<dbReference type="PANTHER" id="PTHR23355">
    <property type="entry name" value="RIBONUCLEASE"/>
    <property type="match status" value="1"/>
</dbReference>
<dbReference type="Pfam" id="PF08206">
    <property type="entry name" value="OB_RNB"/>
    <property type="match status" value="1"/>
</dbReference>
<dbReference type="Pfam" id="PF00773">
    <property type="entry name" value="RNB"/>
    <property type="match status" value="1"/>
</dbReference>
<dbReference type="Pfam" id="PF00575">
    <property type="entry name" value="S1"/>
    <property type="match status" value="1"/>
</dbReference>
<dbReference type="SMART" id="SM00357">
    <property type="entry name" value="CSP"/>
    <property type="match status" value="1"/>
</dbReference>
<dbReference type="SMART" id="SM00955">
    <property type="entry name" value="RNB"/>
    <property type="match status" value="1"/>
</dbReference>
<dbReference type="SUPFAM" id="SSF50249">
    <property type="entry name" value="Nucleic acid-binding proteins"/>
    <property type="match status" value="4"/>
</dbReference>
<dbReference type="PROSITE" id="PS01175">
    <property type="entry name" value="RIBONUCLEASE_II"/>
    <property type="match status" value="1"/>
</dbReference>
<organism>
    <name type="scientific">Yersinia pseudotuberculosis serotype O:3 (strain YPIII)</name>
    <dbReference type="NCBI Taxonomy" id="502800"/>
    <lineage>
        <taxon>Bacteria</taxon>
        <taxon>Pseudomonadati</taxon>
        <taxon>Pseudomonadota</taxon>
        <taxon>Gammaproteobacteria</taxon>
        <taxon>Enterobacterales</taxon>
        <taxon>Yersiniaceae</taxon>
        <taxon>Yersinia</taxon>
    </lineage>
</organism>